<gene>
    <name evidence="6" type="primary">SAG13</name>
    <name evidence="8" type="ordered locus">At2g29350</name>
    <name evidence="9" type="ORF">F16P2.27</name>
</gene>
<comment type="function">
    <text evidence="4">Unspecific reductase providing both diastereomeric alcohols from the prochiral ketones. Active on cyclic monoterpenes and small flexible lipophilic carbonyls. No activity with tropinone, nitrogen-containing tropinone analogs, tropine or pseudotropine as substrate.</text>
</comment>
<comment type="biophysicochemical properties">
    <kinetics>
        <KM evidence="4">30.1 uM for NADPH</KM>
        <KM evidence="4">37.8 uM for NADP</KM>
        <KM evidence="4">264.1 uM for citronellal</KM>
        <KM evidence="4">612 uM for pentanal</KM>
        <KM evidence="4">98.1 uM for nerol</KM>
        <KM evidence="4">504.9 uM for 3-methylcyclohexanone</KM>
        <KM evidence="4">57.2 uM for 3-methylcyclohexanol</KM>
        <KM evidence="4">5.1 uM for 4-methylcyclohexanone</KM>
        <KM evidence="4">29.2 uM for 4-methylcyclohexanol</KM>
        <KM evidence="4">118.1 uM for (-)-menthone</KM>
        <KM evidence="4">50.1 uM for (-)-menthol</KM>
        <KM evidence="4">75.7 uM for (-)-carvone</KM>
        <KM evidence="4">1340 uM for (-)-alpha-thujone</KM>
    </kinetics>
</comment>
<comment type="alternative products">
    <event type="alternative splicing"/>
    <isoform>
        <id>Q9ZW18-1</id>
        <name>1</name>
        <sequence type="displayed"/>
    </isoform>
    <isoform>
        <id>Q9ZW18-2</id>
        <name>2</name>
        <sequence type="described" ref="VSP_057491 VSP_057492"/>
    </isoform>
    <isoform>
        <id>Q9ZW18-3</id>
        <name>3</name>
        <sequence type="described" ref="VSP_057490"/>
    </isoform>
</comment>
<comment type="developmental stage">
    <text evidence="3 5">Expressed 2 days before visible senescence began (PubMed:9617813). Detected from day 24 (PubMed:18978034).</text>
</comment>
<comment type="induction">
    <text evidence="3 5">No basal expression in untreated young leaves, but rapidly and strongly up-regulated upon abscisic acid treatment (PubMed:9617813). Strongly up-regulated (10'000-fold higher expression at day 33) in the quinolinate synthase mutant old5 (PubMed:18978034).</text>
</comment>
<comment type="similarity">
    <text evidence="7">Belongs to the short-chain dehydrogenases/reductases (SDR) family. SDR65C subfamily.</text>
</comment>
<evidence type="ECO:0000250" key="1">
    <source>
        <dbReference type="UniProtKB" id="P50162"/>
    </source>
</evidence>
<evidence type="ECO:0000255" key="2">
    <source>
        <dbReference type="PROSITE-ProRule" id="PRU10001"/>
    </source>
</evidence>
<evidence type="ECO:0000269" key="3">
    <source>
    </source>
</evidence>
<evidence type="ECO:0000269" key="4">
    <source>
    </source>
</evidence>
<evidence type="ECO:0000269" key="5">
    <source>
    </source>
</evidence>
<evidence type="ECO:0000303" key="6">
    <source>
    </source>
</evidence>
<evidence type="ECO:0000305" key="7"/>
<evidence type="ECO:0000312" key="8">
    <source>
        <dbReference type="Araport" id="AT2G29350"/>
    </source>
</evidence>
<evidence type="ECO:0000312" key="9">
    <source>
        <dbReference type="EMBL" id="AAC95203.1"/>
    </source>
</evidence>
<evidence type="ECO:0000312" key="10">
    <source>
        <dbReference type="Proteomes" id="UP000006548"/>
    </source>
</evidence>
<feature type="chain" id="PRO_0000432216" description="Senescence-associated protein 13">
    <location>
        <begin position="1"/>
        <end position="269"/>
    </location>
</feature>
<feature type="active site" description="Proton acceptor" evidence="2">
    <location>
        <position position="167"/>
    </location>
</feature>
<feature type="binding site" evidence="1">
    <location>
        <begin position="21"/>
        <end position="45"/>
    </location>
    <ligand>
        <name>NADP(+)</name>
        <dbReference type="ChEBI" id="CHEBI:58349"/>
    </ligand>
</feature>
<feature type="binding site" evidence="1">
    <location>
        <position position="154"/>
    </location>
    <ligand>
        <name>substrate</name>
    </ligand>
</feature>
<feature type="splice variant" id="VSP_057490" description="In isoform 3.">
    <location>
        <begin position="1"/>
        <end position="38"/>
    </location>
</feature>
<feature type="splice variant" id="VSP_057491" description="In isoform 2.">
    <original>FFDEEFKKEAVRTTPMGR</original>
    <variation>VRPKFIFLLRTMKNKKNT</variation>
    <location>
        <begin position="208"/>
        <end position="225"/>
    </location>
</feature>
<feature type="splice variant" id="VSP_057492" description="In isoform 2.">
    <location>
        <begin position="226"/>
        <end position="269"/>
    </location>
</feature>
<reference key="1">
    <citation type="journal article" date="1999" name="Nature">
        <title>Sequence and analysis of chromosome 2 of the plant Arabidopsis thaliana.</title>
        <authorList>
            <person name="Lin X."/>
            <person name="Kaul S."/>
            <person name="Rounsley S.D."/>
            <person name="Shea T.P."/>
            <person name="Benito M.-I."/>
            <person name="Town C.D."/>
            <person name="Fujii C.Y."/>
            <person name="Mason T.M."/>
            <person name="Bowman C.L."/>
            <person name="Barnstead M.E."/>
            <person name="Feldblyum T.V."/>
            <person name="Buell C.R."/>
            <person name="Ketchum K.A."/>
            <person name="Lee J.J."/>
            <person name="Ronning C.M."/>
            <person name="Koo H.L."/>
            <person name="Moffat K.S."/>
            <person name="Cronin L.A."/>
            <person name="Shen M."/>
            <person name="Pai G."/>
            <person name="Van Aken S."/>
            <person name="Umayam L."/>
            <person name="Tallon L.J."/>
            <person name="Gill J.E."/>
            <person name="Adams M.D."/>
            <person name="Carrera A.J."/>
            <person name="Creasy T.H."/>
            <person name="Goodman H.M."/>
            <person name="Somerville C.R."/>
            <person name="Copenhaver G.P."/>
            <person name="Preuss D."/>
            <person name="Nierman W.C."/>
            <person name="White O."/>
            <person name="Eisen J.A."/>
            <person name="Salzberg S.L."/>
            <person name="Fraser C.M."/>
            <person name="Venter J.C."/>
        </authorList>
    </citation>
    <scope>NUCLEOTIDE SEQUENCE [LARGE SCALE GENOMIC DNA]</scope>
    <source>
        <strain>cv. Columbia</strain>
    </source>
</reference>
<reference key="2">
    <citation type="journal article" date="2017" name="Plant J.">
        <title>Araport11: a complete reannotation of the Arabidopsis thaliana reference genome.</title>
        <authorList>
            <person name="Cheng C.Y."/>
            <person name="Krishnakumar V."/>
            <person name="Chan A.P."/>
            <person name="Thibaud-Nissen F."/>
            <person name="Schobel S."/>
            <person name="Town C.D."/>
        </authorList>
    </citation>
    <scope>GENOME REANNOTATION</scope>
    <source>
        <strain>cv. Columbia</strain>
    </source>
</reference>
<reference key="3">
    <citation type="journal article" date="2003" name="Science">
        <title>Empirical analysis of transcriptional activity in the Arabidopsis genome.</title>
        <authorList>
            <person name="Yamada K."/>
            <person name="Lim J."/>
            <person name="Dale J.M."/>
            <person name="Chen H."/>
            <person name="Shinn P."/>
            <person name="Palm C.J."/>
            <person name="Southwick A.M."/>
            <person name="Wu H.C."/>
            <person name="Kim C.J."/>
            <person name="Nguyen M."/>
            <person name="Pham P.K."/>
            <person name="Cheuk R.F."/>
            <person name="Karlin-Newmann G."/>
            <person name="Liu S.X."/>
            <person name="Lam B."/>
            <person name="Sakano H."/>
            <person name="Wu T."/>
            <person name="Yu G."/>
            <person name="Miranda M."/>
            <person name="Quach H.L."/>
            <person name="Tripp M."/>
            <person name="Chang C.H."/>
            <person name="Lee J.M."/>
            <person name="Toriumi M.J."/>
            <person name="Chan M.M."/>
            <person name="Tang C.C."/>
            <person name="Onodera C.S."/>
            <person name="Deng J.M."/>
            <person name="Akiyama K."/>
            <person name="Ansari Y."/>
            <person name="Arakawa T."/>
            <person name="Banh J."/>
            <person name="Banno F."/>
            <person name="Bowser L."/>
            <person name="Brooks S.Y."/>
            <person name="Carninci P."/>
            <person name="Chao Q."/>
            <person name="Choy N."/>
            <person name="Enju A."/>
            <person name="Goldsmith A.D."/>
            <person name="Gurjal M."/>
            <person name="Hansen N.F."/>
            <person name="Hayashizaki Y."/>
            <person name="Johnson-Hopson C."/>
            <person name="Hsuan V.W."/>
            <person name="Iida K."/>
            <person name="Karnes M."/>
            <person name="Khan S."/>
            <person name="Koesema E."/>
            <person name="Ishida J."/>
            <person name="Jiang P.X."/>
            <person name="Jones T."/>
            <person name="Kawai J."/>
            <person name="Kamiya A."/>
            <person name="Meyers C."/>
            <person name="Nakajima M."/>
            <person name="Narusaka M."/>
            <person name="Seki M."/>
            <person name="Sakurai T."/>
            <person name="Satou M."/>
            <person name="Tamse R."/>
            <person name="Vaysberg M."/>
            <person name="Wallender E.K."/>
            <person name="Wong C."/>
            <person name="Yamamura Y."/>
            <person name="Yuan S."/>
            <person name="Shinozaki K."/>
            <person name="Davis R.W."/>
            <person name="Theologis A."/>
            <person name="Ecker J.R."/>
        </authorList>
    </citation>
    <scope>NUCLEOTIDE SEQUENCE [LARGE SCALE MRNA] (ISOFORM 1)</scope>
    <source>
        <strain>cv. Columbia</strain>
    </source>
</reference>
<reference key="4">
    <citation type="submission" date="2002-03" db="EMBL/GenBank/DDBJ databases">
        <title>Full-length cDNA from Arabidopsis thaliana.</title>
        <authorList>
            <person name="Brover V.V."/>
            <person name="Troukhan M.E."/>
            <person name="Alexandrov N.A."/>
            <person name="Lu Y.-P."/>
            <person name="Flavell R.B."/>
            <person name="Feldmann K.A."/>
        </authorList>
    </citation>
    <scope>NUCLEOTIDE SEQUENCE [LARGE SCALE MRNA] (ISOFORM 1)</scope>
</reference>
<reference key="5">
    <citation type="journal article" date="1998" name="Plant Mol. Biol.">
        <title>A comparison of the expression patterns of several senescence-associated genes in response to stress and hormone treatment.</title>
        <authorList>
            <person name="Weaver L.M."/>
            <person name="Gan S."/>
            <person name="Quirino B."/>
            <person name="Amasino R.M."/>
        </authorList>
    </citation>
    <scope>DEVELOPMENTAL STAGE</scope>
    <scope>INDUCTION BY ABSCISIC ACID</scope>
</reference>
<reference key="6">
    <citation type="journal article" date="2008" name="Plant Cell">
        <title>The Arabidopsis onset of leaf death5 mutation of quinolinate synthase affects nicotinamide adenine dinucleotide biosynthesis and causes early ageing.</title>
        <authorList>
            <person name="Schippers J.H."/>
            <person name="Nunes-Nesi A."/>
            <person name="Apetrei R."/>
            <person name="Hille J."/>
            <person name="Fernie A.R."/>
            <person name="Dijkwel P.P."/>
        </authorList>
    </citation>
    <scope>DEVELOPMENTAL STAGE</scope>
    <scope>INDUCTION</scope>
</reference>
<reference key="7">
    <citation type="journal article" date="2009" name="Chem. Biol. Interact.">
        <title>The SDR (short-chain dehydrogenase/reductase and related enzymes) nomenclature initiative.</title>
        <authorList>
            <person name="Persson B."/>
            <person name="Kallberg Y."/>
            <person name="Bray J.E."/>
            <person name="Bruford E."/>
            <person name="Dellaporta S.L."/>
            <person name="Favia A.D."/>
            <person name="Duarte R.G."/>
            <person name="Joernvall H."/>
            <person name="Kavanagh K.L."/>
            <person name="Kedishvili N."/>
            <person name="Kisiela M."/>
            <person name="Maser E."/>
            <person name="Mindnich R."/>
            <person name="Orchard S."/>
            <person name="Penning T.M."/>
            <person name="Thornton J.M."/>
            <person name="Adamski J."/>
            <person name="Oppermann U."/>
        </authorList>
    </citation>
    <scope>GENE FAMILY</scope>
    <scope>NOMENCLATURE</scope>
</reference>
<reference key="8">
    <citation type="journal article" date="2014" name="Bioorg. Chem.">
        <title>Substrate flexibility and reaction specificity of tropinone reductase-like short-chain dehydrogenases.</title>
        <authorList>
            <person name="Reinhardt N."/>
            <person name="Fischer J."/>
            <person name="Coppi R."/>
            <person name="Blum E."/>
            <person name="Brandt W."/>
            <person name="Draeger B."/>
        </authorList>
    </citation>
    <scope>FUNCTION</scope>
    <scope>3D-STRUCTURE MODELING</scope>
    <scope>SUBSTRATE SPECIFICITY</scope>
    <scope>BIOPHYSICOCHEMICAL PROPERTIES</scope>
</reference>
<accession>Q9ZW18</accession>
<accession>F4IKM5</accession>
<accession>F4IKM6</accession>
<protein>
    <recommendedName>
        <fullName evidence="6">Senescence-associated protein 13</fullName>
    </recommendedName>
    <alternativeName>
        <fullName evidence="1">Tropinone reductase homolog SAG13</fullName>
        <ecNumber evidence="7">1.1.1.-</ecNumber>
    </alternativeName>
</protein>
<dbReference type="EC" id="1.1.1.-" evidence="7"/>
<dbReference type="EMBL" id="AC004561">
    <property type="protein sequence ID" value="AAC95203.1"/>
    <property type="molecule type" value="Genomic_DNA"/>
</dbReference>
<dbReference type="EMBL" id="CP002685">
    <property type="protein sequence ID" value="AEC08239.1"/>
    <property type="molecule type" value="Genomic_DNA"/>
</dbReference>
<dbReference type="EMBL" id="CP002685">
    <property type="protein sequence ID" value="AEC08240.1"/>
    <property type="molecule type" value="Genomic_DNA"/>
</dbReference>
<dbReference type="EMBL" id="CP002685">
    <property type="protein sequence ID" value="AEC08241.1"/>
    <property type="molecule type" value="Genomic_DNA"/>
</dbReference>
<dbReference type="EMBL" id="AY065111">
    <property type="protein sequence ID" value="AAL38287.1"/>
    <property type="molecule type" value="mRNA"/>
</dbReference>
<dbReference type="EMBL" id="AY081642">
    <property type="protein sequence ID" value="AAM10204.1"/>
    <property type="molecule type" value="mRNA"/>
</dbReference>
<dbReference type="EMBL" id="AY085321">
    <property type="protein sequence ID" value="AAM62552.1"/>
    <property type="molecule type" value="mRNA"/>
</dbReference>
<dbReference type="PIR" id="C84695">
    <property type="entry name" value="C84695"/>
</dbReference>
<dbReference type="RefSeq" id="NP_001031442.1">
    <molecule id="Q9ZW18-3"/>
    <property type="nucleotide sequence ID" value="NM_001036365.1"/>
</dbReference>
<dbReference type="RefSeq" id="NP_180496.1">
    <molecule id="Q9ZW18-1"/>
    <property type="nucleotide sequence ID" value="NM_128489.3"/>
</dbReference>
<dbReference type="RefSeq" id="NP_973558.1">
    <molecule id="Q9ZW18-2"/>
    <property type="nucleotide sequence ID" value="NM_201829.2"/>
</dbReference>
<dbReference type="SMR" id="Q9ZW18"/>
<dbReference type="FunCoup" id="Q9ZW18">
    <property type="interactions" value="6"/>
</dbReference>
<dbReference type="IntAct" id="Q9ZW18">
    <property type="interactions" value="6"/>
</dbReference>
<dbReference type="STRING" id="3702.Q9ZW18"/>
<dbReference type="PaxDb" id="3702-AT2G29350.1"/>
<dbReference type="ProteomicsDB" id="226685">
    <molecule id="Q9ZW18-1"/>
</dbReference>
<dbReference type="EnsemblPlants" id="AT2G29350.1">
    <molecule id="Q9ZW18-1"/>
    <property type="protein sequence ID" value="AT2G29350.1"/>
    <property type="gene ID" value="AT2G29350"/>
</dbReference>
<dbReference type="EnsemblPlants" id="AT2G29350.2">
    <molecule id="Q9ZW18-2"/>
    <property type="protein sequence ID" value="AT2G29350.2"/>
    <property type="gene ID" value="AT2G29350"/>
</dbReference>
<dbReference type="EnsemblPlants" id="AT2G29350.3">
    <molecule id="Q9ZW18-3"/>
    <property type="protein sequence ID" value="AT2G29350.3"/>
    <property type="gene ID" value="AT2G29350"/>
</dbReference>
<dbReference type="GeneID" id="817484"/>
<dbReference type="Gramene" id="AT2G29350.1">
    <molecule id="Q9ZW18-1"/>
    <property type="protein sequence ID" value="AT2G29350.1"/>
    <property type="gene ID" value="AT2G29350"/>
</dbReference>
<dbReference type="Gramene" id="AT2G29350.2">
    <molecule id="Q9ZW18-2"/>
    <property type="protein sequence ID" value="AT2G29350.2"/>
    <property type="gene ID" value="AT2G29350"/>
</dbReference>
<dbReference type="Gramene" id="AT2G29350.3">
    <molecule id="Q9ZW18-3"/>
    <property type="protein sequence ID" value="AT2G29350.3"/>
    <property type="gene ID" value="AT2G29350"/>
</dbReference>
<dbReference type="KEGG" id="ath:AT2G29350"/>
<dbReference type="Araport" id="AT2G29350"/>
<dbReference type="TAIR" id="AT2G29350">
    <property type="gene designation" value="SAG13"/>
</dbReference>
<dbReference type="eggNOG" id="KOG0725">
    <property type="taxonomic scope" value="Eukaryota"/>
</dbReference>
<dbReference type="HOGENOM" id="CLU_010194_1_1_1"/>
<dbReference type="InParanoid" id="Q9ZW18"/>
<dbReference type="OMA" id="SWKDEIM"/>
<dbReference type="OrthoDB" id="417891at2759"/>
<dbReference type="PhylomeDB" id="Q9ZW18"/>
<dbReference type="BioCyc" id="ARA:AT2G29350-MONOMER"/>
<dbReference type="SABIO-RK" id="Q9ZW18"/>
<dbReference type="PRO" id="PR:Q9ZW18"/>
<dbReference type="Proteomes" id="UP000006548">
    <property type="component" value="Chromosome 2"/>
</dbReference>
<dbReference type="ExpressionAtlas" id="Q9ZW18">
    <property type="expression patterns" value="baseline and differential"/>
</dbReference>
<dbReference type="GO" id="GO:0005777">
    <property type="term" value="C:peroxisome"/>
    <property type="evidence" value="ECO:0007005"/>
    <property type="project" value="TAIR"/>
</dbReference>
<dbReference type="GO" id="GO:0005886">
    <property type="term" value="C:plasma membrane"/>
    <property type="evidence" value="ECO:0000314"/>
    <property type="project" value="TAIR"/>
</dbReference>
<dbReference type="GO" id="GO:0004022">
    <property type="term" value="F:alcohol dehydrogenase (NAD+) activity"/>
    <property type="evidence" value="ECO:0000304"/>
    <property type="project" value="TAIR"/>
</dbReference>
<dbReference type="GO" id="GO:0002213">
    <property type="term" value="P:defense response to insect"/>
    <property type="evidence" value="ECO:0000270"/>
    <property type="project" value="TAIR"/>
</dbReference>
<dbReference type="GO" id="GO:0031347">
    <property type="term" value="P:regulation of defense response"/>
    <property type="evidence" value="ECO:0000315"/>
    <property type="project" value="TAIR"/>
</dbReference>
<dbReference type="FunFam" id="3.40.50.720:FF:000084">
    <property type="entry name" value="Short-chain dehydrogenase reductase"/>
    <property type="match status" value="1"/>
</dbReference>
<dbReference type="Gene3D" id="3.40.50.720">
    <property type="entry name" value="NAD(P)-binding Rossmann-like Domain"/>
    <property type="match status" value="1"/>
</dbReference>
<dbReference type="InterPro" id="IPR036291">
    <property type="entry name" value="NAD(P)-bd_dom_sf"/>
</dbReference>
<dbReference type="InterPro" id="IPR020904">
    <property type="entry name" value="Sc_DH/Rdtase_CS"/>
</dbReference>
<dbReference type="InterPro" id="IPR002347">
    <property type="entry name" value="SDR_fam"/>
</dbReference>
<dbReference type="InterPro" id="IPR045000">
    <property type="entry name" value="TR"/>
</dbReference>
<dbReference type="PANTHER" id="PTHR42898:SF84">
    <property type="entry name" value="SENESCENCE-ASSOCIATED PROTEIN 13"/>
    <property type="match status" value="1"/>
</dbReference>
<dbReference type="PANTHER" id="PTHR42898">
    <property type="entry name" value="TROPINONE REDUCTASE"/>
    <property type="match status" value="1"/>
</dbReference>
<dbReference type="Pfam" id="PF13561">
    <property type="entry name" value="adh_short_C2"/>
    <property type="match status" value="1"/>
</dbReference>
<dbReference type="PRINTS" id="PR00081">
    <property type="entry name" value="GDHRDH"/>
</dbReference>
<dbReference type="PRINTS" id="PR00080">
    <property type="entry name" value="SDRFAMILY"/>
</dbReference>
<dbReference type="SUPFAM" id="SSF51735">
    <property type="entry name" value="NAD(P)-binding Rossmann-fold domains"/>
    <property type="match status" value="1"/>
</dbReference>
<dbReference type="PROSITE" id="PS00061">
    <property type="entry name" value="ADH_SHORT"/>
    <property type="match status" value="1"/>
</dbReference>
<name>SAG13_ARATH</name>
<organism evidence="10">
    <name type="scientific">Arabidopsis thaliana</name>
    <name type="common">Mouse-ear cress</name>
    <dbReference type="NCBI Taxonomy" id="3702"/>
    <lineage>
        <taxon>Eukaryota</taxon>
        <taxon>Viridiplantae</taxon>
        <taxon>Streptophyta</taxon>
        <taxon>Embryophyta</taxon>
        <taxon>Tracheophyta</taxon>
        <taxon>Spermatophyta</taxon>
        <taxon>Magnoliopsida</taxon>
        <taxon>eudicotyledons</taxon>
        <taxon>Gunneridae</taxon>
        <taxon>Pentapetalae</taxon>
        <taxon>rosids</taxon>
        <taxon>malvids</taxon>
        <taxon>Brassicales</taxon>
        <taxon>Brassicaceae</taxon>
        <taxon>Camelineae</taxon>
        <taxon>Arabidopsis</taxon>
    </lineage>
</organism>
<keyword id="KW-0025">Alternative splicing</keyword>
<keyword id="KW-0521">NADP</keyword>
<keyword id="KW-0560">Oxidoreductase</keyword>
<keyword id="KW-1185">Reference proteome</keyword>
<proteinExistence type="evidence at protein level"/>
<sequence>MAKEGGLGENSRWSLGGMTALVTGGSKGIGEAVVEELAMLGAKVHTCARDETQLQERLREWQAKGFQVTTSVCDVSSRDQRVKLMETVSSLYQGKLNILVNNVGTSIFKPTTEYTAEDFSFVMATNLESAFHLSQLAHPLLKASGSGSIVLISSAAGVVHVNVGSIYGATKGAMNQLARNLACEWASDNIRTNSVCPWYITTPLSNDFFDEEFKKEAVRTTPMGRVGEANEVSPLVAFLCLPSASYITGQTICVDGGATVNGFSFKTMP</sequence>